<proteinExistence type="inferred from homology"/>
<accession>A7TL22</accession>
<keyword id="KW-0963">Cytoplasm</keyword>
<keyword id="KW-0539">Nucleus</keyword>
<keyword id="KW-1185">Reference proteome</keyword>
<dbReference type="EMBL" id="DS480411">
    <property type="protein sequence ID" value="EDO17078.1"/>
    <property type="molecule type" value="Genomic_DNA"/>
</dbReference>
<dbReference type="RefSeq" id="XP_001644936.1">
    <property type="nucleotide sequence ID" value="XM_001644886.1"/>
</dbReference>
<dbReference type="SMR" id="A7TL22"/>
<dbReference type="FunCoup" id="A7TL22">
    <property type="interactions" value="31"/>
</dbReference>
<dbReference type="STRING" id="436907.A7TL22"/>
<dbReference type="GeneID" id="5545270"/>
<dbReference type="KEGG" id="vpo:Kpol_530p48"/>
<dbReference type="eggNOG" id="ENOG502QTYD">
    <property type="taxonomic scope" value="Eukaryota"/>
</dbReference>
<dbReference type="HOGENOM" id="CLU_097607_0_0_1"/>
<dbReference type="InParanoid" id="A7TL22"/>
<dbReference type="OMA" id="GEVNTTW"/>
<dbReference type="OrthoDB" id="4045395at2759"/>
<dbReference type="PhylomeDB" id="A7TL22"/>
<dbReference type="Proteomes" id="UP000000267">
    <property type="component" value="Unassembled WGS sequence"/>
</dbReference>
<dbReference type="GO" id="GO:0005789">
    <property type="term" value="C:endoplasmic reticulum membrane"/>
    <property type="evidence" value="ECO:0007669"/>
    <property type="project" value="EnsemblFungi"/>
</dbReference>
<dbReference type="GO" id="GO:0005634">
    <property type="term" value="C:nucleus"/>
    <property type="evidence" value="ECO:0007669"/>
    <property type="project" value="UniProtKB-SubCell"/>
</dbReference>
<dbReference type="GO" id="GO:0006612">
    <property type="term" value="P:protein targeting to membrane"/>
    <property type="evidence" value="ECO:0007669"/>
    <property type="project" value="EnsemblFungi"/>
</dbReference>
<dbReference type="CDD" id="cd11693">
    <property type="entry name" value="HRI1_C_like"/>
    <property type="match status" value="1"/>
</dbReference>
<dbReference type="CDD" id="cd11692">
    <property type="entry name" value="HRI1_N_like"/>
    <property type="match status" value="1"/>
</dbReference>
<dbReference type="Gene3D" id="2.40.128.310">
    <property type="entry name" value="Protein HRI1, C-terminal domain"/>
    <property type="match status" value="1"/>
</dbReference>
<dbReference type="Gene3D" id="2.40.128.320">
    <property type="entry name" value="Protein HRI1, N-terminal domain"/>
    <property type="match status" value="1"/>
</dbReference>
<dbReference type="InterPro" id="IPR031818">
    <property type="entry name" value="Hri1"/>
</dbReference>
<dbReference type="InterPro" id="IPR038744">
    <property type="entry name" value="Hri1_N"/>
</dbReference>
<dbReference type="InterPro" id="IPR043047">
    <property type="entry name" value="Hri1_N_sf"/>
</dbReference>
<dbReference type="Pfam" id="PF16815">
    <property type="entry name" value="HRI1"/>
    <property type="match status" value="1"/>
</dbReference>
<evidence type="ECO:0000250" key="1"/>
<evidence type="ECO:0000305" key="2"/>
<name>HRI1_VANPO</name>
<reference key="1">
    <citation type="journal article" date="2007" name="Proc. Natl. Acad. Sci. U.S.A.">
        <title>Independent sorting-out of thousands of duplicated gene pairs in two yeast species descended from a whole-genome duplication.</title>
        <authorList>
            <person name="Scannell D.R."/>
            <person name="Frank A.C."/>
            <person name="Conant G.C."/>
            <person name="Byrne K.P."/>
            <person name="Woolfit M."/>
            <person name="Wolfe K.H."/>
        </authorList>
    </citation>
    <scope>NUCLEOTIDE SEQUENCE [LARGE SCALE GENOMIC DNA]</scope>
    <source>
        <strain>ATCC 22028 / DSM 70294 / BCRC 21397 / CBS 2163 / NBRC 10782 / NRRL Y-8283 / UCD 57-17</strain>
    </source>
</reference>
<feature type="chain" id="PRO_0000410812" description="Protein HRI1">
    <location>
        <begin position="1"/>
        <end position="243"/>
    </location>
</feature>
<gene>
    <name type="primary">HRI1</name>
    <name type="ORF">Kpol_530p48</name>
</gene>
<comment type="subcellular location">
    <subcellularLocation>
        <location evidence="1">Cytoplasm</location>
    </subcellularLocation>
    <subcellularLocation>
        <location evidence="1">Nucleus</location>
    </subcellularLocation>
</comment>
<comment type="similarity">
    <text evidence="2">Belongs to the HRI1 family.</text>
</comment>
<sequence length="243" mass="27895">MPAFLKRLIFQVGDQASERTYTYTSVSNDGHYISLRPLIRPKDDKEREFPVEWAFAGLNTDIRVTKIDEYTVTQDFNFWIDINRYLKVPNIHQGEVHTTWKRWESECLEETGTVYPFGPDKEGVNFMELWQPLDSNRVEDVVAPIGMDNSKDRSVVLKIDDSKYEGLMIVVGKWAQGLMTKKGESSTDGINMIRSVETSTNSYKTLFSQGSNVDKFPSAFENLSKGTKVDVNGFEWEVIESTY</sequence>
<protein>
    <recommendedName>
        <fullName>Protein HRI1</fullName>
    </recommendedName>
</protein>
<organism>
    <name type="scientific">Vanderwaltozyma polyspora (strain ATCC 22028 / DSM 70294 / BCRC 21397 / CBS 2163 / NBRC 10782 / NRRL Y-8283 / UCD 57-17)</name>
    <name type="common">Kluyveromyces polysporus</name>
    <dbReference type="NCBI Taxonomy" id="436907"/>
    <lineage>
        <taxon>Eukaryota</taxon>
        <taxon>Fungi</taxon>
        <taxon>Dikarya</taxon>
        <taxon>Ascomycota</taxon>
        <taxon>Saccharomycotina</taxon>
        <taxon>Saccharomycetes</taxon>
        <taxon>Saccharomycetales</taxon>
        <taxon>Saccharomycetaceae</taxon>
        <taxon>Vanderwaltozyma</taxon>
    </lineage>
</organism>